<feature type="chain" id="PRO_1000187322" description="Inosose dehydratase">
    <location>
        <begin position="1"/>
        <end position="298"/>
    </location>
</feature>
<protein>
    <recommendedName>
        <fullName evidence="1">Inosose dehydratase</fullName>
        <ecNumber evidence="1">4.2.1.44</ecNumber>
    </recommendedName>
    <alternativeName>
        <fullName evidence="1">2-keto-myo-inositol dehydratase</fullName>
        <shortName evidence="1">2KMI dehydratase</shortName>
    </alternativeName>
</protein>
<keyword id="KW-0170">Cobalt</keyword>
<keyword id="KW-0456">Lyase</keyword>
<keyword id="KW-0464">Manganese</keyword>
<evidence type="ECO:0000255" key="1">
    <source>
        <dbReference type="HAMAP-Rule" id="MF_01672"/>
    </source>
</evidence>
<reference key="1">
    <citation type="submission" date="2008-10" db="EMBL/GenBank/DDBJ databases">
        <title>Genome sequence of Bacillus anthracis str. CDC 684.</title>
        <authorList>
            <person name="Dodson R.J."/>
            <person name="Munk A.C."/>
            <person name="Brettin T."/>
            <person name="Bruce D."/>
            <person name="Detter C."/>
            <person name="Tapia R."/>
            <person name="Han C."/>
            <person name="Sutton G."/>
            <person name="Sims D."/>
        </authorList>
    </citation>
    <scope>NUCLEOTIDE SEQUENCE [LARGE SCALE GENOMIC DNA]</scope>
    <source>
        <strain>CDC 684 / NRRL 3495</strain>
    </source>
</reference>
<organism>
    <name type="scientific">Bacillus anthracis (strain CDC 684 / NRRL 3495)</name>
    <dbReference type="NCBI Taxonomy" id="568206"/>
    <lineage>
        <taxon>Bacteria</taxon>
        <taxon>Bacillati</taxon>
        <taxon>Bacillota</taxon>
        <taxon>Bacilli</taxon>
        <taxon>Bacillales</taxon>
        <taxon>Bacillaceae</taxon>
        <taxon>Bacillus</taxon>
        <taxon>Bacillus cereus group</taxon>
    </lineage>
</organism>
<sequence length="298" mass="33595">MFKENTIKLGIAPIAWTNDDMPELGAENTFEQCISEMALAGFNGSEVGNKYPRNTVVLKKSLELRNLEIASAWFSTFLTTKPIEETVEEFIKHRDFLHGMGAKVIVVSEQGHSIQGLMDVPLFKNKPVFTEEEWEKLADGLHHLGKLAQEKGLHIVYHHHMGTGVQTTTEIEKLMDMTDPALVSLLFDTGHLVFSGEEPLYILKKYLPRIKHVHLKDIRQEVVDVVKEKELSFLQAVKNGAFTVPGDGVIVFDEVFTILANSNYQGWFVVEAEQDPALANPFEYALKARKFIQEKAGL</sequence>
<name>IOLE_BACAC</name>
<accession>C3LHY0</accession>
<proteinExistence type="inferred from homology"/>
<gene>
    <name evidence="1" type="primary">iolE</name>
    <name type="ordered locus">BAMEG_2086</name>
</gene>
<comment type="function">
    <text evidence="1">Catalyzes the dehydration of inosose (2-keto-myo-inositol, 2KMI or 2,4,6/3,5-pentahydroxycyclohexanone) to 3D-(3,5/4)-trihydroxycyclohexane-1,2-dione (D-2,3-diketo-4-deoxy-epi-inositol).</text>
</comment>
<comment type="catalytic activity">
    <reaction evidence="1">
        <text>scyllo-inosose = 3D-3,5/4-trihydroxycyclohexane-1,2-dione + H2O</text>
        <dbReference type="Rhea" id="RHEA:14065"/>
        <dbReference type="ChEBI" id="CHEBI:15377"/>
        <dbReference type="ChEBI" id="CHEBI:17811"/>
        <dbReference type="ChEBI" id="CHEBI:28446"/>
        <dbReference type="EC" id="4.2.1.44"/>
    </reaction>
</comment>
<comment type="cofactor">
    <cofactor evidence="1">
        <name>glutathione</name>
        <dbReference type="ChEBI" id="CHEBI:57925"/>
    </cofactor>
</comment>
<comment type="cofactor">
    <cofactor evidence="1">
        <name>Co(2+)</name>
        <dbReference type="ChEBI" id="CHEBI:48828"/>
    </cofactor>
    <cofactor evidence="1">
        <name>Mn(2+)</name>
        <dbReference type="ChEBI" id="CHEBI:29035"/>
    </cofactor>
</comment>
<comment type="pathway">
    <text evidence="1">Polyol metabolism; myo-inositol degradation into acetyl-CoA; acetyl-CoA from myo-inositol: step 2/7.</text>
</comment>
<comment type="similarity">
    <text evidence="1">Belongs to the IolE/MocC family.</text>
</comment>
<dbReference type="EC" id="4.2.1.44" evidence="1"/>
<dbReference type="EMBL" id="CP001215">
    <property type="protein sequence ID" value="ACP13312.1"/>
    <property type="molecule type" value="Genomic_DNA"/>
</dbReference>
<dbReference type="RefSeq" id="WP_000471986.1">
    <property type="nucleotide sequence ID" value="NC_012581.1"/>
</dbReference>
<dbReference type="SMR" id="C3LHY0"/>
<dbReference type="KEGG" id="bah:BAMEG_2086"/>
<dbReference type="HOGENOM" id="CLU_059523_0_0_9"/>
<dbReference type="UniPathway" id="UPA00076">
    <property type="reaction ID" value="UER00144"/>
</dbReference>
<dbReference type="GO" id="GO:0030145">
    <property type="term" value="F:manganese ion binding"/>
    <property type="evidence" value="ECO:0007669"/>
    <property type="project" value="UniProtKB-UniRule"/>
</dbReference>
<dbReference type="GO" id="GO:0050114">
    <property type="term" value="F:myo-inosose-2 dehydratase activity"/>
    <property type="evidence" value="ECO:0007669"/>
    <property type="project" value="UniProtKB-UniRule"/>
</dbReference>
<dbReference type="GO" id="GO:0019310">
    <property type="term" value="P:inositol catabolic process"/>
    <property type="evidence" value="ECO:0007669"/>
    <property type="project" value="UniProtKB-UniRule"/>
</dbReference>
<dbReference type="Gene3D" id="3.20.20.150">
    <property type="entry name" value="Divalent-metal-dependent TIM barrel enzymes"/>
    <property type="match status" value="1"/>
</dbReference>
<dbReference type="HAMAP" id="MF_01672">
    <property type="entry name" value="IolE"/>
    <property type="match status" value="1"/>
</dbReference>
<dbReference type="InterPro" id="IPR023952">
    <property type="entry name" value="IolE"/>
</dbReference>
<dbReference type="InterPro" id="IPR030823">
    <property type="entry name" value="IolE/MocC"/>
</dbReference>
<dbReference type="InterPro" id="IPR050312">
    <property type="entry name" value="IolE/XylAMocC-like"/>
</dbReference>
<dbReference type="InterPro" id="IPR036237">
    <property type="entry name" value="Xyl_isomerase-like_sf"/>
</dbReference>
<dbReference type="InterPro" id="IPR013022">
    <property type="entry name" value="Xyl_isomerase-like_TIM-brl"/>
</dbReference>
<dbReference type="NCBIfam" id="TIGR04379">
    <property type="entry name" value="myo_inos_iolE"/>
    <property type="match status" value="1"/>
</dbReference>
<dbReference type="PANTHER" id="PTHR12110">
    <property type="entry name" value="HYDROXYPYRUVATE ISOMERASE"/>
    <property type="match status" value="1"/>
</dbReference>
<dbReference type="PANTHER" id="PTHR12110:SF41">
    <property type="entry name" value="INOSOSE DEHYDRATASE"/>
    <property type="match status" value="1"/>
</dbReference>
<dbReference type="Pfam" id="PF01261">
    <property type="entry name" value="AP_endonuc_2"/>
    <property type="match status" value="1"/>
</dbReference>
<dbReference type="SUPFAM" id="SSF51658">
    <property type="entry name" value="Xylose isomerase-like"/>
    <property type="match status" value="1"/>
</dbReference>